<protein>
    <recommendedName>
        <fullName>Inactive alanine aminotransferase</fullName>
    </recommendedName>
    <alternativeName>
        <fullName>Glutamate pyruvate transaminase</fullName>
        <shortName>GPT</shortName>
    </alternativeName>
    <alternativeName>
        <fullName>Glutamic--alanine transaminase</fullName>
    </alternativeName>
    <alternativeName>
        <fullName>Glutamic--pyruvic transaminase</fullName>
    </alternativeName>
</protein>
<accession>P52892</accession>
<accession>D6VS97</accession>
<accession>Q66RF8</accession>
<proteinExistence type="evidence at protein level"/>
<name>ALAT2_YEAST</name>
<sequence length="507" mass="56770">MTMTHQQDLKGVFTAKDLDFKPAGKITKKDLNTGVTKAEYAVRGAIPTRADELKEELKKNPEVLPFDDIINANIGNPQQLDQKPLTFTRQVLAILEYPEILRVGHNELASLNLFSRDALERAERLLNDIGGSIGAYSHSQGVPGIRQTVADFITRRDGGEPATPEDIYLTTGASSAATSLLSLLCKDSQTGLLIPIPQYPLYTASASLFNAQVLPYYLDEESNWSTNSDEIEKVVQDALKKQIRPSVLIVINPGNPTGAVLSEETIARICLIAAKYGITIISDEVYQENIFNDVKFHSMKKVLRKLQHLYPGKFDNVQLASLHSISKGFMDECGQRGGYMEIIGFSQEIRDALFKLMSISICSVVTGQAVVDLMVKPPQPGDESYEQDHDERLKIFHEMRTRANLLYETFKELEGIECQKPQGAMYLFPRLVLPKKALCESERLGIEPDEFYCTSLLESTGICTVPGSGFGQRPGTYHVRTTFLAPGTKWIQDWKEFHQDFFSKYRN</sequence>
<feature type="chain" id="PRO_0000123937" description="Inactive alanine aminotransferase">
    <location>
        <begin position="1"/>
        <end position="507"/>
    </location>
</feature>
<feature type="binding site" evidence="1">
    <location>
        <position position="173"/>
    </location>
    <ligand>
        <name>pyridoxal 5'-phosphate</name>
        <dbReference type="ChEBI" id="CHEBI:597326"/>
    </ligand>
</feature>
<feature type="binding site" evidence="1">
    <location>
        <position position="174"/>
    </location>
    <ligand>
        <name>pyridoxal 5'-phosphate</name>
        <dbReference type="ChEBI" id="CHEBI:597326"/>
    </ligand>
</feature>
<feature type="binding site" evidence="1">
    <location>
        <position position="199"/>
    </location>
    <ligand>
        <name>pyridoxal 5'-phosphate</name>
        <dbReference type="ChEBI" id="CHEBI:597326"/>
    </ligand>
</feature>
<feature type="binding site" evidence="1">
    <location>
        <position position="255"/>
    </location>
    <ligand>
        <name>pyridoxal 5'-phosphate</name>
        <dbReference type="ChEBI" id="CHEBI:597326"/>
    </ligand>
</feature>
<feature type="binding site" evidence="1">
    <location>
        <position position="324"/>
    </location>
    <ligand>
        <name>pyridoxal 5'-phosphate</name>
        <dbReference type="ChEBI" id="CHEBI:597326"/>
    </ligand>
</feature>
<feature type="binding site" evidence="1">
    <location>
        <position position="336"/>
    </location>
    <ligand>
        <name>pyridoxal 5'-phosphate</name>
        <dbReference type="ChEBI" id="CHEBI:597326"/>
    </ligand>
</feature>
<feature type="modified residue" description="N6-(pyridoxal phosphate)lysine" evidence="1">
    <location>
        <position position="327"/>
    </location>
</feature>
<feature type="sequence conflict" description="In Ref. 3; AAU09694." evidence="6" ref="3">
    <original>K</original>
    <variation>E</variation>
    <location>
        <position position="420"/>
    </location>
</feature>
<evidence type="ECO:0000250" key="1">
    <source>
        <dbReference type="UniProtKB" id="Q8TD30"/>
    </source>
</evidence>
<evidence type="ECO:0000269" key="2">
    <source>
    </source>
</evidence>
<evidence type="ECO:0000269" key="3">
    <source>
    </source>
</evidence>
<evidence type="ECO:0000269" key="4">
    <source>
    </source>
</evidence>
<evidence type="ECO:0000269" key="5">
    <source>
    </source>
</evidence>
<evidence type="ECO:0000305" key="6"/>
<comment type="function">
    <text evidence="4 5">Inactive alanine aminotransferase. Forms a catalytically active Schiff base with PLP, but lacks alanine transaminase activity, probably due to an altered structural conformation of the dimeric enzyme. This suggests this protein may have a yet undiscovered physiological function.</text>
</comment>
<comment type="cofactor">
    <cofactor evidence="5">
        <name>pyridoxal 5'-phosphate</name>
        <dbReference type="ChEBI" id="CHEBI:597326"/>
    </cofactor>
</comment>
<comment type="subunit">
    <text evidence="5">Homodimer.</text>
</comment>
<comment type="subcellular location">
    <subcellularLocation>
        <location evidence="2">Cytoplasm</location>
    </subcellularLocation>
    <subcellularLocation>
        <location evidence="2">Nucleus</location>
    </subcellularLocation>
</comment>
<comment type="induction">
    <text evidence="4">Repressed by alanine.</text>
</comment>
<comment type="miscellaneous">
    <text evidence="3">Present with 3480 molecules/cell in log phase SD medium.</text>
</comment>
<comment type="similarity">
    <text evidence="6">Belongs to the class-I pyridoxal-phosphate-dependent aminotransferase family. Alanine aminotransferase subfamily.</text>
</comment>
<dbReference type="EMBL" id="Z48758">
    <property type="protein sequence ID" value="CAA88665.1"/>
    <property type="molecule type" value="Genomic_DNA"/>
</dbReference>
<dbReference type="EMBL" id="AY723777">
    <property type="protein sequence ID" value="AAU09694.1"/>
    <property type="molecule type" value="Genomic_DNA"/>
</dbReference>
<dbReference type="EMBL" id="BK006938">
    <property type="protein sequence ID" value="DAA11957.1"/>
    <property type="molecule type" value="Genomic_DNA"/>
</dbReference>
<dbReference type="PIR" id="S52677">
    <property type="entry name" value="S52677"/>
</dbReference>
<dbReference type="RefSeq" id="NP_010396.1">
    <property type="nucleotide sequence ID" value="NM_001180419.1"/>
</dbReference>
<dbReference type="SMR" id="P52892"/>
<dbReference type="BioGRID" id="32169">
    <property type="interactions" value="75"/>
</dbReference>
<dbReference type="DIP" id="DIP-4931N"/>
<dbReference type="FunCoup" id="P52892">
    <property type="interactions" value="535"/>
</dbReference>
<dbReference type="IntAct" id="P52892">
    <property type="interactions" value="3"/>
</dbReference>
<dbReference type="MINT" id="P52892"/>
<dbReference type="STRING" id="4932.YDR111C"/>
<dbReference type="iPTMnet" id="P52892"/>
<dbReference type="PaxDb" id="4932-YDR111C"/>
<dbReference type="PeptideAtlas" id="P52892"/>
<dbReference type="EnsemblFungi" id="YDR111C_mRNA">
    <property type="protein sequence ID" value="YDR111C"/>
    <property type="gene ID" value="YDR111C"/>
</dbReference>
<dbReference type="GeneID" id="851690"/>
<dbReference type="KEGG" id="sce:YDR111C"/>
<dbReference type="AGR" id="SGD:S000002518"/>
<dbReference type="SGD" id="S000002518">
    <property type="gene designation" value="ALT2"/>
</dbReference>
<dbReference type="VEuPathDB" id="FungiDB:YDR111C"/>
<dbReference type="eggNOG" id="KOG0258">
    <property type="taxonomic scope" value="Eukaryota"/>
</dbReference>
<dbReference type="GeneTree" id="ENSGT00940000172095"/>
<dbReference type="HOGENOM" id="CLU_014254_3_0_1"/>
<dbReference type="InParanoid" id="P52892"/>
<dbReference type="OMA" id="AYMARTM"/>
<dbReference type="OrthoDB" id="1732682at2759"/>
<dbReference type="BioCyc" id="YEAST:YDR111C-MONOMER"/>
<dbReference type="Reactome" id="R-SCE-8964540">
    <property type="pathway name" value="Alanine metabolism"/>
</dbReference>
<dbReference type="PRO" id="PR:P52892"/>
<dbReference type="Proteomes" id="UP000002311">
    <property type="component" value="Chromosome IV"/>
</dbReference>
<dbReference type="RNAct" id="P52892">
    <property type="molecule type" value="protein"/>
</dbReference>
<dbReference type="GO" id="GO:0005737">
    <property type="term" value="C:cytoplasm"/>
    <property type="evidence" value="ECO:0007005"/>
    <property type="project" value="SGD"/>
</dbReference>
<dbReference type="GO" id="GO:0005634">
    <property type="term" value="C:nucleus"/>
    <property type="evidence" value="ECO:0007005"/>
    <property type="project" value="SGD"/>
</dbReference>
<dbReference type="GO" id="GO:0004021">
    <property type="term" value="F:L-alanine:2-oxoglutarate aminotransferase activity"/>
    <property type="evidence" value="ECO:0007669"/>
    <property type="project" value="UniProtKB-EC"/>
</dbReference>
<dbReference type="GO" id="GO:0030170">
    <property type="term" value="F:pyridoxal phosphate binding"/>
    <property type="evidence" value="ECO:0000314"/>
    <property type="project" value="SGD"/>
</dbReference>
<dbReference type="GO" id="GO:0009058">
    <property type="term" value="P:biosynthetic process"/>
    <property type="evidence" value="ECO:0007669"/>
    <property type="project" value="InterPro"/>
</dbReference>
<dbReference type="GO" id="GO:0042853">
    <property type="term" value="P:L-alanine catabolic process"/>
    <property type="evidence" value="ECO:0007669"/>
    <property type="project" value="UniProtKB-UniPathway"/>
</dbReference>
<dbReference type="CDD" id="cd00609">
    <property type="entry name" value="AAT_like"/>
    <property type="match status" value="1"/>
</dbReference>
<dbReference type="FunFam" id="1.10.287.1970:FF:000001">
    <property type="entry name" value="Alanine aminotransferase 2"/>
    <property type="match status" value="1"/>
</dbReference>
<dbReference type="FunFam" id="3.90.1150.10:FF:000010">
    <property type="entry name" value="Alanine aminotransferase 2"/>
    <property type="match status" value="1"/>
</dbReference>
<dbReference type="FunFam" id="3.40.640.10:FF:000012">
    <property type="entry name" value="alanine aminotransferase 2"/>
    <property type="match status" value="1"/>
</dbReference>
<dbReference type="Gene3D" id="1.10.287.1970">
    <property type="match status" value="1"/>
</dbReference>
<dbReference type="Gene3D" id="3.90.1150.10">
    <property type="entry name" value="Aspartate Aminotransferase, domain 1"/>
    <property type="match status" value="1"/>
</dbReference>
<dbReference type="Gene3D" id="3.40.640.10">
    <property type="entry name" value="Type I PLP-dependent aspartate aminotransferase-like (Major domain)"/>
    <property type="match status" value="1"/>
</dbReference>
<dbReference type="InterPro" id="IPR045088">
    <property type="entry name" value="ALAT1/2-like"/>
</dbReference>
<dbReference type="InterPro" id="IPR004839">
    <property type="entry name" value="Aminotransferase_I/II_large"/>
</dbReference>
<dbReference type="InterPro" id="IPR015424">
    <property type="entry name" value="PyrdxlP-dep_Trfase"/>
</dbReference>
<dbReference type="InterPro" id="IPR015421">
    <property type="entry name" value="PyrdxlP-dep_Trfase_major"/>
</dbReference>
<dbReference type="InterPro" id="IPR015422">
    <property type="entry name" value="PyrdxlP-dep_Trfase_small"/>
</dbReference>
<dbReference type="PANTHER" id="PTHR11751">
    <property type="entry name" value="ALANINE AMINOTRANSFERASE"/>
    <property type="match status" value="1"/>
</dbReference>
<dbReference type="PANTHER" id="PTHR11751:SF29">
    <property type="entry name" value="ALANINE TRANSAMINASE"/>
    <property type="match status" value="1"/>
</dbReference>
<dbReference type="Pfam" id="PF00155">
    <property type="entry name" value="Aminotran_1_2"/>
    <property type="match status" value="1"/>
</dbReference>
<dbReference type="SUPFAM" id="SSF53383">
    <property type="entry name" value="PLP-dependent transferases"/>
    <property type="match status" value="1"/>
</dbReference>
<gene>
    <name type="primary">ALT2</name>
    <name type="ordered locus">YDR111C</name>
    <name type="ORF">YD9727.07C</name>
</gene>
<reference key="1">
    <citation type="journal article" date="1997" name="Nature">
        <title>The nucleotide sequence of Saccharomyces cerevisiae chromosome IV.</title>
        <authorList>
            <person name="Jacq C."/>
            <person name="Alt-Moerbe J."/>
            <person name="Andre B."/>
            <person name="Arnold W."/>
            <person name="Bahr A."/>
            <person name="Ballesta J.P.G."/>
            <person name="Bargues M."/>
            <person name="Baron L."/>
            <person name="Becker A."/>
            <person name="Biteau N."/>
            <person name="Bloecker H."/>
            <person name="Blugeon C."/>
            <person name="Boskovic J."/>
            <person name="Brandt P."/>
            <person name="Brueckner M."/>
            <person name="Buitrago M.J."/>
            <person name="Coster F."/>
            <person name="Delaveau T."/>
            <person name="del Rey F."/>
            <person name="Dujon B."/>
            <person name="Eide L.G."/>
            <person name="Garcia-Cantalejo J.M."/>
            <person name="Goffeau A."/>
            <person name="Gomez-Peris A."/>
            <person name="Granotier C."/>
            <person name="Hanemann V."/>
            <person name="Hankeln T."/>
            <person name="Hoheisel J.D."/>
            <person name="Jaeger W."/>
            <person name="Jimenez A."/>
            <person name="Jonniaux J.-L."/>
            <person name="Kraemer C."/>
            <person name="Kuester H."/>
            <person name="Laamanen P."/>
            <person name="Legros Y."/>
            <person name="Louis E.J."/>
            <person name="Moeller-Rieker S."/>
            <person name="Monnet A."/>
            <person name="Moro M."/>
            <person name="Mueller-Auer S."/>
            <person name="Nussbaumer B."/>
            <person name="Paricio N."/>
            <person name="Paulin L."/>
            <person name="Perea J."/>
            <person name="Perez-Alonso M."/>
            <person name="Perez-Ortin J.E."/>
            <person name="Pohl T.M."/>
            <person name="Prydz H."/>
            <person name="Purnelle B."/>
            <person name="Rasmussen S.W."/>
            <person name="Remacha M.A."/>
            <person name="Revuelta J.L."/>
            <person name="Rieger M."/>
            <person name="Salom D."/>
            <person name="Saluz H.P."/>
            <person name="Saiz J.E."/>
            <person name="Saren A.-M."/>
            <person name="Schaefer M."/>
            <person name="Scharfe M."/>
            <person name="Schmidt E.R."/>
            <person name="Schneider C."/>
            <person name="Scholler P."/>
            <person name="Schwarz S."/>
            <person name="Soler-Mira A."/>
            <person name="Urrestarazu L.A."/>
            <person name="Verhasselt P."/>
            <person name="Vissers S."/>
            <person name="Voet M."/>
            <person name="Volckaert G."/>
            <person name="Wagner G."/>
            <person name="Wambutt R."/>
            <person name="Wedler E."/>
            <person name="Wedler H."/>
            <person name="Woelfl S."/>
            <person name="Harris D.E."/>
            <person name="Bowman S."/>
            <person name="Brown D."/>
            <person name="Churcher C.M."/>
            <person name="Connor R."/>
            <person name="Dedman K."/>
            <person name="Gentles S."/>
            <person name="Hamlin N."/>
            <person name="Hunt S."/>
            <person name="Jones L."/>
            <person name="McDonald S."/>
            <person name="Murphy L.D."/>
            <person name="Niblett D."/>
            <person name="Odell C."/>
            <person name="Oliver K."/>
            <person name="Rajandream M.A."/>
            <person name="Richards C."/>
            <person name="Shore L."/>
            <person name="Walsh S.V."/>
            <person name="Barrell B.G."/>
            <person name="Dietrich F.S."/>
            <person name="Mulligan J.T."/>
            <person name="Allen E."/>
            <person name="Araujo R."/>
            <person name="Aviles E."/>
            <person name="Berno A."/>
            <person name="Carpenter J."/>
            <person name="Chen E."/>
            <person name="Cherry J.M."/>
            <person name="Chung E."/>
            <person name="Duncan M."/>
            <person name="Hunicke-Smith S."/>
            <person name="Hyman R.W."/>
            <person name="Komp C."/>
            <person name="Lashkari D."/>
            <person name="Lew H."/>
            <person name="Lin D."/>
            <person name="Mosedale D."/>
            <person name="Nakahara K."/>
            <person name="Namath A."/>
            <person name="Oefner P."/>
            <person name="Oh C."/>
            <person name="Petel F.X."/>
            <person name="Roberts D."/>
            <person name="Schramm S."/>
            <person name="Schroeder M."/>
            <person name="Shogren T."/>
            <person name="Shroff N."/>
            <person name="Winant A."/>
            <person name="Yelton M.A."/>
            <person name="Botstein D."/>
            <person name="Davis R.W."/>
            <person name="Johnston M."/>
            <person name="Andrews S."/>
            <person name="Brinkman R."/>
            <person name="Cooper J."/>
            <person name="Ding H."/>
            <person name="Du Z."/>
            <person name="Favello A."/>
            <person name="Fulton L."/>
            <person name="Gattung S."/>
            <person name="Greco T."/>
            <person name="Hallsworth K."/>
            <person name="Hawkins J."/>
            <person name="Hillier L.W."/>
            <person name="Jier M."/>
            <person name="Johnson D."/>
            <person name="Johnston L."/>
            <person name="Kirsten J."/>
            <person name="Kucaba T."/>
            <person name="Langston Y."/>
            <person name="Latreille P."/>
            <person name="Le T."/>
            <person name="Mardis E."/>
            <person name="Menezes S."/>
            <person name="Miller N."/>
            <person name="Nhan M."/>
            <person name="Pauley A."/>
            <person name="Peluso D."/>
            <person name="Rifkin L."/>
            <person name="Riles L."/>
            <person name="Taich A."/>
            <person name="Trevaskis E."/>
            <person name="Vignati D."/>
            <person name="Wilcox L."/>
            <person name="Wohldman P."/>
            <person name="Vaudin M."/>
            <person name="Wilson R."/>
            <person name="Waterston R."/>
            <person name="Albermann K."/>
            <person name="Hani J."/>
            <person name="Heumann K."/>
            <person name="Kleine K."/>
            <person name="Mewes H.-W."/>
            <person name="Zollner A."/>
            <person name="Zaccaria P."/>
        </authorList>
    </citation>
    <scope>NUCLEOTIDE SEQUENCE [LARGE SCALE GENOMIC DNA]</scope>
    <source>
        <strain>ATCC 204508 / S288c</strain>
    </source>
</reference>
<reference key="2">
    <citation type="journal article" date="2014" name="G3 (Bethesda)">
        <title>The reference genome sequence of Saccharomyces cerevisiae: Then and now.</title>
        <authorList>
            <person name="Engel S.R."/>
            <person name="Dietrich F.S."/>
            <person name="Fisk D.G."/>
            <person name="Binkley G."/>
            <person name="Balakrishnan R."/>
            <person name="Costanzo M.C."/>
            <person name="Dwight S.S."/>
            <person name="Hitz B.C."/>
            <person name="Karra K."/>
            <person name="Nash R.S."/>
            <person name="Weng S."/>
            <person name="Wong E.D."/>
            <person name="Lloyd P."/>
            <person name="Skrzypek M.S."/>
            <person name="Miyasato S.R."/>
            <person name="Simison M."/>
            <person name="Cherry J.M."/>
        </authorList>
    </citation>
    <scope>GENOME REANNOTATION</scope>
    <source>
        <strain>ATCC 204508 / S288c</strain>
    </source>
</reference>
<reference key="3">
    <citation type="journal article" date="2007" name="Genome Res.">
        <title>Approaching a complete repository of sequence-verified protein-encoding clones for Saccharomyces cerevisiae.</title>
        <authorList>
            <person name="Hu Y."/>
            <person name="Rolfs A."/>
            <person name="Bhullar B."/>
            <person name="Murthy T.V.S."/>
            <person name="Zhu C."/>
            <person name="Berger M.F."/>
            <person name="Camargo A.A."/>
            <person name="Kelley F."/>
            <person name="McCarron S."/>
            <person name="Jepson D."/>
            <person name="Richardson A."/>
            <person name="Raphael J."/>
            <person name="Moreira D."/>
            <person name="Taycher E."/>
            <person name="Zuo D."/>
            <person name="Mohr S."/>
            <person name="Kane M.F."/>
            <person name="Williamson J."/>
            <person name="Simpson A.J.G."/>
            <person name="Bulyk M.L."/>
            <person name="Harlow E."/>
            <person name="Marsischky G."/>
            <person name="Kolodner R.D."/>
            <person name="LaBaer J."/>
        </authorList>
    </citation>
    <scope>NUCLEOTIDE SEQUENCE [GENOMIC DNA]</scope>
    <source>
        <strain>ATCC 204508 / S288c</strain>
    </source>
</reference>
<reference key="4">
    <citation type="journal article" date="2003" name="Nature">
        <title>Global analysis of protein localization in budding yeast.</title>
        <authorList>
            <person name="Huh W.-K."/>
            <person name="Falvo J.V."/>
            <person name="Gerke L.C."/>
            <person name="Carroll A.S."/>
            <person name="Howson R.W."/>
            <person name="Weissman J.S."/>
            <person name="O'Shea E.K."/>
        </authorList>
    </citation>
    <scope>SUBCELLULAR LOCATION [LARGE SCALE ANALYSIS]</scope>
</reference>
<reference key="5">
    <citation type="journal article" date="2003" name="Nature">
        <title>Global analysis of protein expression in yeast.</title>
        <authorList>
            <person name="Ghaemmaghami S."/>
            <person name="Huh W.-K."/>
            <person name="Bower K."/>
            <person name="Howson R.W."/>
            <person name="Belle A."/>
            <person name="Dephoure N."/>
            <person name="O'Shea E.K."/>
            <person name="Weissman J.S."/>
        </authorList>
    </citation>
    <scope>LEVEL OF PROTEIN EXPRESSION [LARGE SCALE ANALYSIS]</scope>
</reference>
<reference key="6">
    <citation type="journal article" date="2012" name="PLoS ONE">
        <title>Paralogous ALT1 and ALT2 retention and diversification have generated catalytically active and inactive aminotransferases in Saccharomyces cerevisiae.</title>
        <authorList>
            <person name="Penalosa-Ruiz G."/>
            <person name="Aranda C."/>
            <person name="Ongay-Larios L."/>
            <person name="Colon M."/>
            <person name="Quezada H."/>
            <person name="Gonzalez A."/>
        </authorList>
    </citation>
    <scope>FUNCTION</scope>
    <scope>INDUCTION</scope>
</reference>
<reference key="7">
    <citation type="journal article" date="2018" name="Front. Microbiol.">
        <title>Saccharomyces cerevisiae differential functionalization of presumed ScALT1 and ScALT2 alanine transaminases has been driven by diversification of pyridoxal phosphate interactions.</title>
        <authorList>
            <person name="Rojas-Ortega E."/>
            <person name="Aguirre-Lopez B."/>
            <person name="Reyes-Vivas H."/>
            <person name="Gonzalez-Andrade M."/>
            <person name="Campero-Basaldua J.C."/>
            <person name="Pardo J.P."/>
            <person name="Gonzalez A."/>
        </authorList>
    </citation>
    <scope>FUNCTION</scope>
    <scope>COFACTOR</scope>
    <scope>SUBUNIT</scope>
</reference>
<keyword id="KW-0032">Aminotransferase</keyword>
<keyword id="KW-0963">Cytoplasm</keyword>
<keyword id="KW-0539">Nucleus</keyword>
<keyword id="KW-0663">Pyridoxal phosphate</keyword>
<keyword id="KW-1185">Reference proteome</keyword>
<keyword id="KW-0808">Transferase</keyword>
<organism>
    <name type="scientific">Saccharomyces cerevisiae (strain ATCC 204508 / S288c)</name>
    <name type="common">Baker's yeast</name>
    <dbReference type="NCBI Taxonomy" id="559292"/>
    <lineage>
        <taxon>Eukaryota</taxon>
        <taxon>Fungi</taxon>
        <taxon>Dikarya</taxon>
        <taxon>Ascomycota</taxon>
        <taxon>Saccharomycotina</taxon>
        <taxon>Saccharomycetes</taxon>
        <taxon>Saccharomycetales</taxon>
        <taxon>Saccharomycetaceae</taxon>
        <taxon>Saccharomyces</taxon>
    </lineage>
</organism>